<name>KIF8_DICDI</name>
<comment type="function">
    <text evidence="1 5">Microtubule-associated force-producing protein that plays a role in organelle transport. Its motor activity is directed toward the microtubule's plus end (By similarity). Cooperates with kif10 and dynein to organize interphase microtubules.</text>
</comment>
<comment type="subcellular location">
    <subcellularLocation>
        <location evidence="7">Cytoplasm</location>
        <location evidence="7">Cytoskeleton</location>
    </subcellularLocation>
</comment>
<comment type="induction">
    <text evidence="6">Constitutively expressed.</text>
</comment>
<comment type="similarity">
    <text evidence="3">Belongs to the TRAFAC class myosin-kinesin ATPase superfamily. Kinesin family.</text>
</comment>
<gene>
    <name type="primary">kif8</name>
    <name type="synonym">K8</name>
    <name type="synonym">ksnH</name>
    <name type="ORF">DDB_G0284471</name>
</gene>
<sequence length="1873" mass="208948">MSSPILNTDDNNCVRVALRVRPLSKKEEAERSMEVVKYVDGEPQVIMGDNNQTFTFDYVFNGKSRQQEIFDDCVANLVDCLFEGYNSTILAYGQTGSGKTFTMGTTSTIGIPTEELGVIPRVIDFIYDKIDRKKDTHQLVLKVSFLELYNEEIRDMLNPYPTAGGLPIREKSNGEVYIPGLVEQIVRSRQQMEEALIRGSQSRTTGSTLMNSHSSRSHAIFSIIVEQTPINSPVTSSSTSSTSTSSSSDDKKQSKGKKKKKSSSPDSLSPNKDDDSSIMIDEDEEDDEEDEDDDIMSMDERNPSIRSMFHFVDLAGSERVKKTKAEGQRLKEGININGGLLALGNVISALGDTRRATTKPKHIPYRDSKLTRMLQSSLGGNSKTLMIACVSPADSNFEETLNTLKYAYRARNIMNKPVVNIDPVTQQILTYKTQIQTLKELLEKCTCRDIGDINSILASIPTVSIPPAPPLSTPTLTNNNNNNSSSNNNNNSNNNKLNVGGNNSGFSRTPSSSSLPPTNSSKSSIVKMNNSRNISSSSSSSSSSSSSSSLTTTPSITNNTATPSPTSVIVTNLSKEKEKEIFDLGMKVSQLEFENNMLQDISNKITSKYKALANRSRQLEEISQNFINNFSPNKDQTYFNELFEQFNSVLNQPTISPITPMMAAVSTQISSSNVIINSNSLLPMAEDNLLPGGKLESINNNNNNNNNSSEGIELFENDSEELSDLNQYISEKEEELELISKTKQQYQQMKEQFDQKVKELQSQLEEVTVEKDQALKELDKDKDKDKDNKDKDQYYEDEKLRLTQHYEKKLNELKQQLDQHAGSNKKDYQRLLDLKRKSEEKIDSLQQDIKDTKRQKSDLLKKMRDELKKRDDAKQTQAKELDALKREARKTEVIIDQLKNQSKKKDLLLQKKTDESESYKKKLKEIEVHKQRVIQPINSKSIPSNNNNNNSSGSVKSSNGSTASSASSANSSSSSSSSSSTNTSTTSTSATNNTTTSTSTSTPTTEQLNRKLLHRKSINVPYWREWLIHQIQKNLEKNELTELLQREFKNKEIFVRQANDLKKAFTSVPSKLSKSEYNEQSQFLETNIKLQNEKILKSQKDLTIISNDCLDSPEILRMVSNTSFDKLPKLIQSSIELCIEYAEINRKNQQIKFINVPTPPTLQSQQQHQKSQHFYIQPPQPLQSQQQQQEKQQKQSNSEQVLEQRSSTSDLLEGIKLAISESNNKNNINNNNNNVNIAKSQPILPSQQQLSSSQELAEEYTSPSTSSLGMKLDQLLDEIKLDKEKREKNKLLNGYPPMSGINYFNPPTPQPLSASSFLTSAAATTTTTTTTTTTTNKQQVPKSFAPLNNTNNNNNNNNSSPLLLISDDKLDHSVFDKDLLDVDILGNDSSNNGFSVININSNNNITIKKPPSSPTRPHRKTTSLQSSPLSLSLESGLATALANNGNNNNNSNNNDVFTRLASQPRPDSRLKKYRDKLNTDDYLMAIKRNMNREDENFMRCNWTFNGHDGGLLTLVLDEQNPSTLYSGGSDKNIKLWDLHTGDNMLDLSSPGPVRSLCINGSSGCMFSGGAERTVKVWDIRSPGNTNLCIFKTPSDVNCLVTYGNYVVSGLENGTFKVWDIRHMQKPLKTPLTTTPHHTGTIFSMSVTSKYLVTGSRDHTINLFHRDSFVLAQKLQPPHHDGVTSIAVLDDVIYSGSRDRTIKRWDVSSINNLINNNGENNSNNLITTQLAQQTVPILSNTPSNSNLIINNNNNIINNNNNNNNSSNNNKSSSAPSSTTSSLSSSLDNSTFSLLNQYQQNRLLNNAHNDWVNCLCIHNGMIFSGGKDSNIKGWDPLLSSNSLLLGHESSISCLTSSKEFLFSGSTDKCIKIWKC</sequence>
<accession>Q6S003</accession>
<accession>Q54PI6</accession>
<accession>Q94500</accession>
<reference key="1">
    <citation type="journal article" date="2003" name="BMC Genomics">
        <title>Identification and phylogenetic analysis of Dictyostelium discoideum kinesin proteins.</title>
        <authorList>
            <person name="Kollmar M."/>
            <person name="Gloeckner G."/>
        </authorList>
    </citation>
    <scope>NUCLEOTIDE SEQUENCE [GENOMIC DNA]</scope>
    <scope>IDENTIFICATION</scope>
    <scope>NOMENCLATURE</scope>
    <source>
        <strain>AX4</strain>
    </source>
</reference>
<reference key="2">
    <citation type="journal article" date="2005" name="Nature">
        <title>The genome of the social amoeba Dictyostelium discoideum.</title>
        <authorList>
            <person name="Eichinger L."/>
            <person name="Pachebat J.A."/>
            <person name="Gloeckner G."/>
            <person name="Rajandream M.A."/>
            <person name="Sucgang R."/>
            <person name="Berriman M."/>
            <person name="Song J."/>
            <person name="Olsen R."/>
            <person name="Szafranski K."/>
            <person name="Xu Q."/>
            <person name="Tunggal B."/>
            <person name="Kummerfeld S."/>
            <person name="Madera M."/>
            <person name="Konfortov B.A."/>
            <person name="Rivero F."/>
            <person name="Bankier A.T."/>
            <person name="Lehmann R."/>
            <person name="Hamlin N."/>
            <person name="Davies R."/>
            <person name="Gaudet P."/>
            <person name="Fey P."/>
            <person name="Pilcher K."/>
            <person name="Chen G."/>
            <person name="Saunders D."/>
            <person name="Sodergren E.J."/>
            <person name="Davis P."/>
            <person name="Kerhornou A."/>
            <person name="Nie X."/>
            <person name="Hall N."/>
            <person name="Anjard C."/>
            <person name="Hemphill L."/>
            <person name="Bason N."/>
            <person name="Farbrother P."/>
            <person name="Desany B."/>
            <person name="Just E."/>
            <person name="Morio T."/>
            <person name="Rost R."/>
            <person name="Churcher C.M."/>
            <person name="Cooper J."/>
            <person name="Haydock S."/>
            <person name="van Driessche N."/>
            <person name="Cronin A."/>
            <person name="Goodhead I."/>
            <person name="Muzny D.M."/>
            <person name="Mourier T."/>
            <person name="Pain A."/>
            <person name="Lu M."/>
            <person name="Harper D."/>
            <person name="Lindsay R."/>
            <person name="Hauser H."/>
            <person name="James K.D."/>
            <person name="Quiles M."/>
            <person name="Madan Babu M."/>
            <person name="Saito T."/>
            <person name="Buchrieser C."/>
            <person name="Wardroper A."/>
            <person name="Felder M."/>
            <person name="Thangavelu M."/>
            <person name="Johnson D."/>
            <person name="Knights A."/>
            <person name="Loulseged H."/>
            <person name="Mungall K.L."/>
            <person name="Oliver K."/>
            <person name="Price C."/>
            <person name="Quail M.A."/>
            <person name="Urushihara H."/>
            <person name="Hernandez J."/>
            <person name="Rabbinowitsch E."/>
            <person name="Steffen D."/>
            <person name="Sanders M."/>
            <person name="Ma J."/>
            <person name="Kohara Y."/>
            <person name="Sharp S."/>
            <person name="Simmonds M.N."/>
            <person name="Spiegler S."/>
            <person name="Tivey A."/>
            <person name="Sugano S."/>
            <person name="White B."/>
            <person name="Walker D."/>
            <person name="Woodward J.R."/>
            <person name="Winckler T."/>
            <person name="Tanaka Y."/>
            <person name="Shaulsky G."/>
            <person name="Schleicher M."/>
            <person name="Weinstock G.M."/>
            <person name="Rosenthal A."/>
            <person name="Cox E.C."/>
            <person name="Chisholm R.L."/>
            <person name="Gibbs R.A."/>
            <person name="Loomis W.F."/>
            <person name="Platzer M."/>
            <person name="Kay R.R."/>
            <person name="Williams J.G."/>
            <person name="Dear P.H."/>
            <person name="Noegel A.A."/>
            <person name="Barrell B.G."/>
            <person name="Kuspa A."/>
        </authorList>
    </citation>
    <scope>NUCLEOTIDE SEQUENCE [LARGE SCALE GENOMIC DNA]</scope>
    <source>
        <strain>AX4</strain>
    </source>
</reference>
<reference key="3">
    <citation type="journal article" date="1998" name="Mol. Biol. Cell">
        <title>A developmentally regulated kinesin-related motor protein from Dictyostelium discoideum.</title>
        <authorList>
            <person name="de Hostos E.L."/>
            <person name="McCaffrey G."/>
            <person name="Sucgang R."/>
            <person name="Pierce D.W."/>
            <person name="Vale R.D."/>
        </authorList>
    </citation>
    <scope>NUCLEOTIDE SEQUENCE [MRNA] OF 13-350</scope>
    <scope>INDUCTION</scope>
    <source>
        <strain>AX3</strain>
    </source>
</reference>
<reference key="4">
    <citation type="journal article" date="2008" name="BMC Cell Biol.">
        <title>Disruption of four kinesin genes in dictyostelium.</title>
        <authorList>
            <person name="Nag D.K."/>
            <person name="Tikhonenko I."/>
            <person name="Soga I."/>
            <person name="Koonce M.P."/>
        </authorList>
    </citation>
    <scope>FUNCTION</scope>
</reference>
<feature type="chain" id="PRO_0000365583" description="Kinesin-related protein 8">
    <location>
        <begin position="1"/>
        <end position="1873"/>
    </location>
</feature>
<feature type="domain" description="Kinesin motor" evidence="3">
    <location>
        <begin position="13"/>
        <end position="413"/>
    </location>
</feature>
<feature type="repeat" description="WD 1">
    <location>
        <begin position="1506"/>
        <end position="1546"/>
    </location>
</feature>
<feature type="repeat" description="WD 2">
    <location>
        <begin position="1548"/>
        <end position="1587"/>
    </location>
</feature>
<feature type="repeat" description="WD 3">
    <location>
        <begin position="1589"/>
        <end position="1628"/>
    </location>
</feature>
<feature type="repeat" description="WD 4">
    <location>
        <begin position="1636"/>
        <end position="1673"/>
    </location>
</feature>
<feature type="repeat" description="WD 5">
    <location>
        <begin position="1677"/>
        <end position="1714"/>
    </location>
</feature>
<feature type="repeat" description="WD 6">
    <location>
        <begin position="1805"/>
        <end position="1842"/>
    </location>
</feature>
<feature type="repeat" description="WD 7">
    <location>
        <begin position="1844"/>
        <end position="1873"/>
    </location>
</feature>
<feature type="region of interest" description="Disordered" evidence="4">
    <location>
        <begin position="231"/>
        <end position="302"/>
    </location>
</feature>
<feature type="region of interest" description="Disordered" evidence="4">
    <location>
        <begin position="463"/>
        <end position="567"/>
    </location>
</feature>
<feature type="region of interest" description="Disordered" evidence="4">
    <location>
        <begin position="778"/>
        <end position="797"/>
    </location>
</feature>
<feature type="region of interest" description="Disordered" evidence="4">
    <location>
        <begin position="841"/>
        <end position="891"/>
    </location>
</feature>
<feature type="region of interest" description="Disordered" evidence="4">
    <location>
        <begin position="930"/>
        <end position="1008"/>
    </location>
</feature>
<feature type="region of interest" description="Disordered" evidence="4">
    <location>
        <begin position="1179"/>
        <end position="1207"/>
    </location>
</feature>
<feature type="region of interest" description="Disordered" evidence="4">
    <location>
        <begin position="1244"/>
        <end position="1267"/>
    </location>
</feature>
<feature type="region of interest" description="Disordered" evidence="4">
    <location>
        <begin position="1328"/>
        <end position="1360"/>
    </location>
</feature>
<feature type="region of interest" description="Disordered" evidence="4">
    <location>
        <begin position="1403"/>
        <end position="1467"/>
    </location>
</feature>
<feature type="region of interest" description="Disordered" evidence="4">
    <location>
        <begin position="1758"/>
        <end position="1780"/>
    </location>
</feature>
<feature type="coiled-coil region" evidence="2">
    <location>
        <begin position="715"/>
        <end position="933"/>
    </location>
</feature>
<feature type="compositionally biased region" description="Low complexity" evidence="4">
    <location>
        <begin position="232"/>
        <end position="247"/>
    </location>
</feature>
<feature type="compositionally biased region" description="Acidic residues" evidence="4">
    <location>
        <begin position="280"/>
        <end position="297"/>
    </location>
</feature>
<feature type="compositionally biased region" description="Low complexity" evidence="4">
    <location>
        <begin position="473"/>
        <end position="567"/>
    </location>
</feature>
<feature type="compositionally biased region" description="Low complexity" evidence="4">
    <location>
        <begin position="937"/>
        <end position="1005"/>
    </location>
</feature>
<feature type="compositionally biased region" description="Low complexity" evidence="4">
    <location>
        <begin position="1182"/>
        <end position="1200"/>
    </location>
</feature>
<feature type="compositionally biased region" description="Low complexity" evidence="4">
    <location>
        <begin position="1244"/>
        <end position="1254"/>
    </location>
</feature>
<feature type="compositionally biased region" description="Low complexity" evidence="4">
    <location>
        <begin position="1348"/>
        <end position="1358"/>
    </location>
</feature>
<feature type="compositionally biased region" description="Low complexity" evidence="4">
    <location>
        <begin position="1423"/>
        <end position="1454"/>
    </location>
</feature>
<feature type="binding site" evidence="3">
    <location>
        <begin position="93"/>
        <end position="100"/>
    </location>
    <ligand>
        <name>ATP</name>
        <dbReference type="ChEBI" id="CHEBI:30616"/>
    </ligand>
</feature>
<feature type="sequence conflict" description="In Ref. 3; AAB09083." evidence="7" ref="3">
    <original>C</original>
    <variation>G</variation>
    <location>
        <position position="13"/>
    </location>
</feature>
<feature type="sequence conflict" description="In Ref. 3; AAB09083." evidence="7" ref="3">
    <original>KK</original>
    <variation>MF</variation>
    <location>
        <begin position="260"/>
        <end position="261"/>
    </location>
</feature>
<feature type="sequence conflict" description="In Ref. 3; AAB09083." evidence="7" ref="3">
    <original>L</original>
    <variation>F</variation>
    <location>
        <position position="350"/>
    </location>
</feature>
<dbReference type="EMBL" id="AY484462">
    <property type="protein sequence ID" value="AAR39438.1"/>
    <property type="molecule type" value="Genomic_DNA"/>
</dbReference>
<dbReference type="EMBL" id="AAFI02000066">
    <property type="protein sequence ID" value="EAL65162.1"/>
    <property type="molecule type" value="Genomic_DNA"/>
</dbReference>
<dbReference type="EMBL" id="U69985">
    <property type="protein sequence ID" value="AAB09083.1"/>
    <property type="molecule type" value="mRNA"/>
</dbReference>
<dbReference type="RefSeq" id="XP_638546.1">
    <property type="nucleotide sequence ID" value="XM_633454.1"/>
</dbReference>
<dbReference type="SMR" id="Q6S003"/>
<dbReference type="STRING" id="44689.Q6S003"/>
<dbReference type="GlyGen" id="Q6S003">
    <property type="glycosylation" value="3 sites"/>
</dbReference>
<dbReference type="PaxDb" id="44689-DDB0191403"/>
<dbReference type="EnsemblProtists" id="EAL65162">
    <property type="protein sequence ID" value="EAL65162"/>
    <property type="gene ID" value="DDB_G0284471"/>
</dbReference>
<dbReference type="GeneID" id="8624639"/>
<dbReference type="KEGG" id="ddi:DDB_G0284471"/>
<dbReference type="dictyBase" id="DDB_G0284471">
    <property type="gene designation" value="kif8"/>
</dbReference>
<dbReference type="VEuPathDB" id="AmoebaDB:DDB_G0284471"/>
<dbReference type="eggNOG" id="KOG0244">
    <property type="taxonomic scope" value="Eukaryota"/>
</dbReference>
<dbReference type="HOGENOM" id="CLU_236383_0_0_1"/>
<dbReference type="InParanoid" id="Q6S003"/>
<dbReference type="OMA" id="SAQFLEX"/>
<dbReference type="Reactome" id="R-DDI-5610787">
    <property type="pathway name" value="Hedgehog 'off' state"/>
</dbReference>
<dbReference type="PRO" id="PR:Q6S003"/>
<dbReference type="Proteomes" id="UP000002195">
    <property type="component" value="Chromosome 4"/>
</dbReference>
<dbReference type="GO" id="GO:0005737">
    <property type="term" value="C:cytoplasm"/>
    <property type="evidence" value="ECO:0000314"/>
    <property type="project" value="dictyBase"/>
</dbReference>
<dbReference type="GO" id="GO:0005871">
    <property type="term" value="C:kinesin complex"/>
    <property type="evidence" value="ECO:0000318"/>
    <property type="project" value="GO_Central"/>
</dbReference>
<dbReference type="GO" id="GO:0005874">
    <property type="term" value="C:microtubule"/>
    <property type="evidence" value="ECO:0000318"/>
    <property type="project" value="GO_Central"/>
</dbReference>
<dbReference type="GO" id="GO:0005524">
    <property type="term" value="F:ATP binding"/>
    <property type="evidence" value="ECO:0007669"/>
    <property type="project" value="UniProtKB-KW"/>
</dbReference>
<dbReference type="GO" id="GO:0016887">
    <property type="term" value="F:ATP hydrolysis activity"/>
    <property type="evidence" value="ECO:0000318"/>
    <property type="project" value="GO_Central"/>
</dbReference>
<dbReference type="GO" id="GO:0008017">
    <property type="term" value="F:microtubule binding"/>
    <property type="evidence" value="ECO:0000318"/>
    <property type="project" value="GO_Central"/>
</dbReference>
<dbReference type="GO" id="GO:0003777">
    <property type="term" value="F:microtubule motor activity"/>
    <property type="evidence" value="ECO:0000318"/>
    <property type="project" value="GO_Central"/>
</dbReference>
<dbReference type="GO" id="GO:0051301">
    <property type="term" value="P:cell division"/>
    <property type="evidence" value="ECO:0007669"/>
    <property type="project" value="UniProtKB-KW"/>
</dbReference>
<dbReference type="GO" id="GO:0031122">
    <property type="term" value="P:cytoplasmic microtubule organization"/>
    <property type="evidence" value="ECO:0000316"/>
    <property type="project" value="dictyBase"/>
</dbReference>
<dbReference type="GO" id="GO:0000226">
    <property type="term" value="P:microtubule cytoskeleton organization"/>
    <property type="evidence" value="ECO:0000315"/>
    <property type="project" value="dictyBase"/>
</dbReference>
<dbReference type="GO" id="GO:0007018">
    <property type="term" value="P:microtubule-based movement"/>
    <property type="evidence" value="ECO:0000318"/>
    <property type="project" value="GO_Central"/>
</dbReference>
<dbReference type="CDD" id="cd01372">
    <property type="entry name" value="KISc_KIF4"/>
    <property type="match status" value="1"/>
</dbReference>
<dbReference type="FunFam" id="2.130.10.10:FF:003287">
    <property type="entry name" value="Kinesin-related protein 8"/>
    <property type="match status" value="1"/>
</dbReference>
<dbReference type="FunFam" id="2.130.10.10:FF:003288">
    <property type="entry name" value="Kinesin-related protein 8"/>
    <property type="match status" value="1"/>
</dbReference>
<dbReference type="Gene3D" id="3.40.850.10">
    <property type="entry name" value="Kinesin motor domain"/>
    <property type="match status" value="1"/>
</dbReference>
<dbReference type="Gene3D" id="2.130.10.10">
    <property type="entry name" value="YVTN repeat-like/Quinoprotein amine dehydrogenase"/>
    <property type="match status" value="2"/>
</dbReference>
<dbReference type="InterPro" id="IPR020472">
    <property type="entry name" value="G-protein_beta_WD-40_rep"/>
</dbReference>
<dbReference type="InterPro" id="IPR027640">
    <property type="entry name" value="Kinesin-like_fam"/>
</dbReference>
<dbReference type="InterPro" id="IPR019821">
    <property type="entry name" value="Kinesin_motor_CS"/>
</dbReference>
<dbReference type="InterPro" id="IPR001752">
    <property type="entry name" value="Kinesin_motor_dom"/>
</dbReference>
<dbReference type="InterPro" id="IPR036961">
    <property type="entry name" value="Kinesin_motor_dom_sf"/>
</dbReference>
<dbReference type="InterPro" id="IPR027417">
    <property type="entry name" value="P-loop_NTPase"/>
</dbReference>
<dbReference type="InterPro" id="IPR015943">
    <property type="entry name" value="WD40/YVTN_repeat-like_dom_sf"/>
</dbReference>
<dbReference type="InterPro" id="IPR019775">
    <property type="entry name" value="WD40_repeat_CS"/>
</dbReference>
<dbReference type="InterPro" id="IPR036322">
    <property type="entry name" value="WD40_repeat_dom_sf"/>
</dbReference>
<dbReference type="InterPro" id="IPR001680">
    <property type="entry name" value="WD40_rpt"/>
</dbReference>
<dbReference type="PANTHER" id="PTHR47969">
    <property type="entry name" value="CHROMOSOME-ASSOCIATED KINESIN KIF4A-RELATED"/>
    <property type="match status" value="1"/>
</dbReference>
<dbReference type="PANTHER" id="PTHR47969:SF15">
    <property type="entry name" value="CHROMOSOME-ASSOCIATED KINESIN KIF4A-RELATED"/>
    <property type="match status" value="1"/>
</dbReference>
<dbReference type="Pfam" id="PF00225">
    <property type="entry name" value="Kinesin"/>
    <property type="match status" value="2"/>
</dbReference>
<dbReference type="Pfam" id="PF00400">
    <property type="entry name" value="WD40"/>
    <property type="match status" value="7"/>
</dbReference>
<dbReference type="PRINTS" id="PR00320">
    <property type="entry name" value="GPROTEINBRPT"/>
</dbReference>
<dbReference type="PRINTS" id="PR00380">
    <property type="entry name" value="KINESINHEAVY"/>
</dbReference>
<dbReference type="SMART" id="SM00129">
    <property type="entry name" value="KISc"/>
    <property type="match status" value="1"/>
</dbReference>
<dbReference type="SMART" id="SM00320">
    <property type="entry name" value="WD40"/>
    <property type="match status" value="7"/>
</dbReference>
<dbReference type="SUPFAM" id="SSF52540">
    <property type="entry name" value="P-loop containing nucleoside triphosphate hydrolases"/>
    <property type="match status" value="1"/>
</dbReference>
<dbReference type="SUPFAM" id="SSF50978">
    <property type="entry name" value="WD40 repeat-like"/>
    <property type="match status" value="1"/>
</dbReference>
<dbReference type="PROSITE" id="PS00411">
    <property type="entry name" value="KINESIN_MOTOR_1"/>
    <property type="match status" value="1"/>
</dbReference>
<dbReference type="PROSITE" id="PS50067">
    <property type="entry name" value="KINESIN_MOTOR_2"/>
    <property type="match status" value="1"/>
</dbReference>
<dbReference type="PROSITE" id="PS00678">
    <property type="entry name" value="WD_REPEATS_1"/>
    <property type="match status" value="1"/>
</dbReference>
<dbReference type="PROSITE" id="PS50082">
    <property type="entry name" value="WD_REPEATS_2"/>
    <property type="match status" value="3"/>
</dbReference>
<dbReference type="PROSITE" id="PS50294">
    <property type="entry name" value="WD_REPEATS_REGION"/>
    <property type="match status" value="2"/>
</dbReference>
<keyword id="KW-0067">ATP-binding</keyword>
<keyword id="KW-0131">Cell cycle</keyword>
<keyword id="KW-0132">Cell division</keyword>
<keyword id="KW-0175">Coiled coil</keyword>
<keyword id="KW-0963">Cytoplasm</keyword>
<keyword id="KW-0206">Cytoskeleton</keyword>
<keyword id="KW-0493">Microtubule</keyword>
<keyword id="KW-0498">Mitosis</keyword>
<keyword id="KW-0505">Motor protein</keyword>
<keyword id="KW-0547">Nucleotide-binding</keyword>
<keyword id="KW-1185">Reference proteome</keyword>
<keyword id="KW-0677">Repeat</keyword>
<keyword id="KW-0813">Transport</keyword>
<keyword id="KW-0853">WD repeat</keyword>
<organism>
    <name type="scientific">Dictyostelium discoideum</name>
    <name type="common">Social amoeba</name>
    <dbReference type="NCBI Taxonomy" id="44689"/>
    <lineage>
        <taxon>Eukaryota</taxon>
        <taxon>Amoebozoa</taxon>
        <taxon>Evosea</taxon>
        <taxon>Eumycetozoa</taxon>
        <taxon>Dictyostelia</taxon>
        <taxon>Dictyosteliales</taxon>
        <taxon>Dictyosteliaceae</taxon>
        <taxon>Dictyostelium</taxon>
    </lineage>
</organism>
<proteinExistence type="evidence at transcript level"/>
<protein>
    <recommendedName>
        <fullName>Kinesin-related protein 8</fullName>
    </recommendedName>
    <alternativeName>
        <fullName>Kinesin family member 8</fullName>
    </alternativeName>
    <alternativeName>
        <fullName>Kinesin-4</fullName>
    </alternativeName>
</protein>
<evidence type="ECO:0000250" key="1"/>
<evidence type="ECO:0000255" key="2"/>
<evidence type="ECO:0000255" key="3">
    <source>
        <dbReference type="PROSITE-ProRule" id="PRU00283"/>
    </source>
</evidence>
<evidence type="ECO:0000256" key="4">
    <source>
        <dbReference type="SAM" id="MobiDB-lite"/>
    </source>
</evidence>
<evidence type="ECO:0000269" key="5">
    <source>
    </source>
</evidence>
<evidence type="ECO:0000269" key="6">
    <source>
    </source>
</evidence>
<evidence type="ECO:0000305" key="7"/>